<name>PUR5_GEOSM</name>
<organism>
    <name type="scientific">Geobacter sp. (strain M21)</name>
    <dbReference type="NCBI Taxonomy" id="443144"/>
    <lineage>
        <taxon>Bacteria</taxon>
        <taxon>Pseudomonadati</taxon>
        <taxon>Thermodesulfobacteriota</taxon>
        <taxon>Desulfuromonadia</taxon>
        <taxon>Geobacterales</taxon>
        <taxon>Geobacteraceae</taxon>
        <taxon>Geobacter</taxon>
    </lineage>
</organism>
<gene>
    <name evidence="1" type="primary">purM</name>
    <name type="ordered locus">GM21_1817</name>
</gene>
<accession>C6E6M9</accession>
<comment type="catalytic activity">
    <reaction evidence="1">
        <text>2-formamido-N(1)-(5-O-phospho-beta-D-ribosyl)acetamidine + ATP = 5-amino-1-(5-phospho-beta-D-ribosyl)imidazole + ADP + phosphate + H(+)</text>
        <dbReference type="Rhea" id="RHEA:23032"/>
        <dbReference type="ChEBI" id="CHEBI:15378"/>
        <dbReference type="ChEBI" id="CHEBI:30616"/>
        <dbReference type="ChEBI" id="CHEBI:43474"/>
        <dbReference type="ChEBI" id="CHEBI:137981"/>
        <dbReference type="ChEBI" id="CHEBI:147287"/>
        <dbReference type="ChEBI" id="CHEBI:456216"/>
        <dbReference type="EC" id="6.3.3.1"/>
    </reaction>
</comment>
<comment type="pathway">
    <text evidence="1">Purine metabolism; IMP biosynthesis via de novo pathway; 5-amino-1-(5-phospho-D-ribosyl)imidazole from N(2)-formyl-N(1)-(5-phospho-D-ribosyl)glycinamide: step 2/2.</text>
</comment>
<comment type="subcellular location">
    <subcellularLocation>
        <location evidence="1">Cytoplasm</location>
    </subcellularLocation>
</comment>
<comment type="similarity">
    <text evidence="1">Belongs to the AIR synthase family.</text>
</comment>
<keyword id="KW-0067">ATP-binding</keyword>
<keyword id="KW-0963">Cytoplasm</keyword>
<keyword id="KW-0436">Ligase</keyword>
<keyword id="KW-0547">Nucleotide-binding</keyword>
<keyword id="KW-0658">Purine biosynthesis</keyword>
<sequence length="348" mass="37269">MKETKITYKDAGVDIDAGNTFVQMIKPLVKATSRPEVLADIGGFGGLFSLNMGKYKHPVLVSGTDGVGTKLKLAFLADRHDTIGIDLVAMCVNDIIVQGAEPLFFLDYLATAKLDPVKAASIIKGVSEGCVQAGCALIGGETAEMPGFYTGDEYDMAGFAVGVVEREKIIDGSSITVGNRLIGLASSGLHSNGYSLARKVILEHMGLGIDDELPGLGKTVAEELLTPTRIYVRSVMNLLRDFNISGLAHITGGGLLENIPRVLPNGCKAVIKKESWEVPEIFRIMQKAGNIEENEMFRTFNCGIGMVLVVPEKEAEEIMIRLSGLNETAFVIGEVAKCDAGKECVELV</sequence>
<dbReference type="EC" id="6.3.3.1" evidence="1"/>
<dbReference type="EMBL" id="CP001661">
    <property type="protein sequence ID" value="ACT17870.1"/>
    <property type="molecule type" value="Genomic_DNA"/>
</dbReference>
<dbReference type="SMR" id="C6E6M9"/>
<dbReference type="STRING" id="443144.GM21_1817"/>
<dbReference type="KEGG" id="gem:GM21_1817"/>
<dbReference type="eggNOG" id="COG0150">
    <property type="taxonomic scope" value="Bacteria"/>
</dbReference>
<dbReference type="HOGENOM" id="CLU_047116_0_0_7"/>
<dbReference type="OrthoDB" id="9777881at2"/>
<dbReference type="UniPathway" id="UPA00074">
    <property type="reaction ID" value="UER00129"/>
</dbReference>
<dbReference type="GO" id="GO:0005829">
    <property type="term" value="C:cytosol"/>
    <property type="evidence" value="ECO:0007669"/>
    <property type="project" value="TreeGrafter"/>
</dbReference>
<dbReference type="GO" id="GO:0005524">
    <property type="term" value="F:ATP binding"/>
    <property type="evidence" value="ECO:0007669"/>
    <property type="project" value="UniProtKB-KW"/>
</dbReference>
<dbReference type="GO" id="GO:0004637">
    <property type="term" value="F:phosphoribosylamine-glycine ligase activity"/>
    <property type="evidence" value="ECO:0007669"/>
    <property type="project" value="TreeGrafter"/>
</dbReference>
<dbReference type="GO" id="GO:0004641">
    <property type="term" value="F:phosphoribosylformylglycinamidine cyclo-ligase activity"/>
    <property type="evidence" value="ECO:0007669"/>
    <property type="project" value="UniProtKB-UniRule"/>
</dbReference>
<dbReference type="GO" id="GO:0006189">
    <property type="term" value="P:'de novo' IMP biosynthetic process"/>
    <property type="evidence" value="ECO:0007669"/>
    <property type="project" value="UniProtKB-UniRule"/>
</dbReference>
<dbReference type="GO" id="GO:0046084">
    <property type="term" value="P:adenine biosynthetic process"/>
    <property type="evidence" value="ECO:0007669"/>
    <property type="project" value="TreeGrafter"/>
</dbReference>
<dbReference type="CDD" id="cd02196">
    <property type="entry name" value="PurM"/>
    <property type="match status" value="1"/>
</dbReference>
<dbReference type="FunFam" id="3.30.1330.10:FF:000001">
    <property type="entry name" value="Phosphoribosylformylglycinamidine cyclo-ligase"/>
    <property type="match status" value="1"/>
</dbReference>
<dbReference type="FunFam" id="3.90.650.10:FF:000001">
    <property type="entry name" value="Phosphoribosylformylglycinamidine cyclo-ligase"/>
    <property type="match status" value="1"/>
</dbReference>
<dbReference type="Gene3D" id="3.90.650.10">
    <property type="entry name" value="PurM-like C-terminal domain"/>
    <property type="match status" value="1"/>
</dbReference>
<dbReference type="Gene3D" id="3.30.1330.10">
    <property type="entry name" value="PurM-like, N-terminal domain"/>
    <property type="match status" value="1"/>
</dbReference>
<dbReference type="HAMAP" id="MF_00741">
    <property type="entry name" value="AIRS"/>
    <property type="match status" value="1"/>
</dbReference>
<dbReference type="InterPro" id="IPR010918">
    <property type="entry name" value="PurM-like_C_dom"/>
</dbReference>
<dbReference type="InterPro" id="IPR036676">
    <property type="entry name" value="PurM-like_C_sf"/>
</dbReference>
<dbReference type="InterPro" id="IPR016188">
    <property type="entry name" value="PurM-like_N"/>
</dbReference>
<dbReference type="InterPro" id="IPR036921">
    <property type="entry name" value="PurM-like_N_sf"/>
</dbReference>
<dbReference type="InterPro" id="IPR004733">
    <property type="entry name" value="PurM_cligase"/>
</dbReference>
<dbReference type="NCBIfam" id="TIGR00878">
    <property type="entry name" value="purM"/>
    <property type="match status" value="1"/>
</dbReference>
<dbReference type="PANTHER" id="PTHR10520:SF12">
    <property type="entry name" value="TRIFUNCTIONAL PURINE BIOSYNTHETIC PROTEIN ADENOSINE-3"/>
    <property type="match status" value="1"/>
</dbReference>
<dbReference type="PANTHER" id="PTHR10520">
    <property type="entry name" value="TRIFUNCTIONAL PURINE BIOSYNTHETIC PROTEIN ADENOSINE-3-RELATED"/>
    <property type="match status" value="1"/>
</dbReference>
<dbReference type="Pfam" id="PF00586">
    <property type="entry name" value="AIRS"/>
    <property type="match status" value="1"/>
</dbReference>
<dbReference type="Pfam" id="PF02769">
    <property type="entry name" value="AIRS_C"/>
    <property type="match status" value="1"/>
</dbReference>
<dbReference type="SUPFAM" id="SSF56042">
    <property type="entry name" value="PurM C-terminal domain-like"/>
    <property type="match status" value="1"/>
</dbReference>
<dbReference type="SUPFAM" id="SSF55326">
    <property type="entry name" value="PurM N-terminal domain-like"/>
    <property type="match status" value="1"/>
</dbReference>
<reference key="1">
    <citation type="submission" date="2009-07" db="EMBL/GenBank/DDBJ databases">
        <title>Complete sequence of Geobacter sp. M21.</title>
        <authorList>
            <consortium name="US DOE Joint Genome Institute"/>
            <person name="Lucas S."/>
            <person name="Copeland A."/>
            <person name="Lapidus A."/>
            <person name="Glavina del Rio T."/>
            <person name="Dalin E."/>
            <person name="Tice H."/>
            <person name="Bruce D."/>
            <person name="Goodwin L."/>
            <person name="Pitluck S."/>
            <person name="Saunders E."/>
            <person name="Brettin T."/>
            <person name="Detter J.C."/>
            <person name="Han C."/>
            <person name="Larimer F."/>
            <person name="Land M."/>
            <person name="Hauser L."/>
            <person name="Kyrpides N."/>
            <person name="Ovchinnikova G."/>
            <person name="Lovley D."/>
        </authorList>
    </citation>
    <scope>NUCLEOTIDE SEQUENCE [LARGE SCALE GENOMIC DNA]</scope>
    <source>
        <strain>M21</strain>
    </source>
</reference>
<feature type="chain" id="PRO_1000212823" description="Phosphoribosylformylglycinamidine cyclo-ligase">
    <location>
        <begin position="1"/>
        <end position="348"/>
    </location>
</feature>
<protein>
    <recommendedName>
        <fullName evidence="1">Phosphoribosylformylglycinamidine cyclo-ligase</fullName>
        <ecNumber evidence="1">6.3.3.1</ecNumber>
    </recommendedName>
    <alternativeName>
        <fullName evidence="1">AIR synthase</fullName>
    </alternativeName>
    <alternativeName>
        <fullName evidence="1">AIRS</fullName>
    </alternativeName>
    <alternativeName>
        <fullName evidence="1">Phosphoribosyl-aminoimidazole synthetase</fullName>
    </alternativeName>
</protein>
<proteinExistence type="inferred from homology"/>
<evidence type="ECO:0000255" key="1">
    <source>
        <dbReference type="HAMAP-Rule" id="MF_00741"/>
    </source>
</evidence>